<keyword id="KW-0002">3D-structure</keyword>
<keyword id="KW-0106">Calcium</keyword>
<keyword id="KW-0119">Carbohydrate metabolism</keyword>
<keyword id="KW-0326">Glycosidase</keyword>
<keyword id="KW-0378">Hydrolase</keyword>
<keyword id="KW-0479">Metal-binding</keyword>
<keyword id="KW-0574">Periplasm</keyword>
<keyword id="KW-0624">Polysaccharide degradation</keyword>
<keyword id="KW-1185">Reference proteome</keyword>
<keyword id="KW-0732">Signal</keyword>
<accession>G8JZS4</accession>
<accession>P71094</accession>
<accession>Q7C3Z2</accession>
<evidence type="ECO:0000255" key="1"/>
<evidence type="ECO:0000269" key="2">
    <source>
    </source>
</evidence>
<evidence type="ECO:0000269" key="3">
    <source>
    </source>
</evidence>
<evidence type="ECO:0000305" key="4"/>
<evidence type="ECO:0000305" key="5">
    <source>
    </source>
</evidence>
<evidence type="ECO:0000305" key="6">
    <source>
    </source>
</evidence>
<evidence type="ECO:0007829" key="7">
    <source>
        <dbReference type="PDB" id="2D73"/>
    </source>
</evidence>
<evidence type="ECO:0007829" key="8">
    <source>
        <dbReference type="PDB" id="2ZQ0"/>
    </source>
</evidence>
<gene>
    <name type="primary">susB</name>
    <name type="ordered locus">BT_3703</name>
</gene>
<sequence length="738" mass="84378">MKKRKILSLIAFLCISFIANAQQKLTSPDNNLVMTFQVDSKGAPTYELTYKNKVVIKPSTLGLELKKEDNTRTDFDWVDRRDLTKLDSKTNLYDGFEVKDTQTATFDETWQPVWGEEKEIRNHYNELAVTLYQPMNDRSIVIRFRLFNDGLGFRYEFPQQKSLNYFVIKEEHSQFGMNGDHIAFWIPGDYDTQEYDYTISRLSEIRGLMKEAITPNSSQTPFSQTGVQTALMMKTDDGLYINLHEAALVDYSCMHLNLDDKNMVFESWLTPDAKGDKGYMQTPCNTPWRTIIVSDDARNILASRITLNLNEPCKIADAASWVKPVKYIGVWWDMITGKGSWAYTDELTSVKLGETDYSKTKPNGKHSANTANVKRYIDFAAAHGFDAVLVEGWNEGWEDWFGNSKDYVFDFVTPYPDFDVKEIHRYAARKGIKMMMHHETSASVRNYERHMDKAYQFMADNGYNSVKSGYVGNIIPRGEHHYGQWMNNHYLYAVKKAADYKIMVNAHEATRPTGICRTYPNLIGNESARGTEYESFGGNKVYHTTILPFTRLVGGPMDYTPGIFETHCNKMNPANNSQVRSTIARQLALYVTMYSPLQMAADIPENYERFMDAFQFIKDVALDWDETNYLEAEPGEYITIARKAKDTDDWYVGCTAGENGHTSKLVFDFLTPGKQYIATVYADAKDADWKENPQAYTIKKGILTNKSKLNLHAANGGGYAISIKEVKDKSEAKGLKRL</sequence>
<protein>
    <recommendedName>
        <fullName>Glucan 1,4-alpha-glucosidase SusB</fullName>
        <ecNumber>3.2.1.3</ecNumber>
    </recommendedName>
    <alternativeName>
        <fullName>Alpha-glucosidase SusB</fullName>
    </alternativeName>
    <alternativeName>
        <fullName>Glucoamylase SusB</fullName>
    </alternativeName>
    <alternativeName>
        <fullName>Starch-utilization system protein B</fullName>
    </alternativeName>
</protein>
<dbReference type="EC" id="3.2.1.3"/>
<dbReference type="EMBL" id="U66897">
    <property type="protein sequence ID" value="AAC44671.1"/>
    <property type="molecule type" value="Genomic_DNA"/>
</dbReference>
<dbReference type="EMBL" id="AE015928">
    <property type="protein sequence ID" value="AAO78808.1"/>
    <property type="molecule type" value="Genomic_DNA"/>
</dbReference>
<dbReference type="RefSeq" id="NP_812614.1">
    <property type="nucleotide sequence ID" value="NC_004663.1"/>
</dbReference>
<dbReference type="RefSeq" id="WP_008767003.1">
    <property type="nucleotide sequence ID" value="NC_004663.1"/>
</dbReference>
<dbReference type="PDB" id="2D73">
    <property type="method" value="X-ray"/>
    <property type="resolution" value="1.60 A"/>
    <property type="chains" value="A/B=22-738"/>
</dbReference>
<dbReference type="PDB" id="2JKA">
    <property type="method" value="X-ray"/>
    <property type="resolution" value="1.90 A"/>
    <property type="chains" value="A/B=22-738"/>
</dbReference>
<dbReference type="PDB" id="2JKE">
    <property type="method" value="X-ray"/>
    <property type="resolution" value="1.70 A"/>
    <property type="chains" value="A/B=22-738"/>
</dbReference>
<dbReference type="PDB" id="2JKP">
    <property type="method" value="X-ray"/>
    <property type="resolution" value="1.99 A"/>
    <property type="chains" value="A/B=22-738"/>
</dbReference>
<dbReference type="PDB" id="2ZQ0">
    <property type="method" value="X-ray"/>
    <property type="resolution" value="1.60 A"/>
    <property type="chains" value="A/B=22-738"/>
</dbReference>
<dbReference type="PDB" id="3WFA">
    <property type="method" value="X-ray"/>
    <property type="resolution" value="2.00 A"/>
    <property type="chains" value="A/B=22-738"/>
</dbReference>
<dbReference type="PDBsum" id="2D73"/>
<dbReference type="PDBsum" id="2JKA"/>
<dbReference type="PDBsum" id="2JKE"/>
<dbReference type="PDBsum" id="2JKP"/>
<dbReference type="PDBsum" id="2ZQ0"/>
<dbReference type="PDBsum" id="3WFA"/>
<dbReference type="SMR" id="G8JZS4"/>
<dbReference type="STRING" id="226186.BT_3703"/>
<dbReference type="CAZy" id="GH97">
    <property type="family name" value="Glycoside Hydrolase Family 97"/>
</dbReference>
<dbReference type="PaxDb" id="226186-BT_3703"/>
<dbReference type="EnsemblBacteria" id="AAO78808">
    <property type="protein sequence ID" value="AAO78808"/>
    <property type="gene ID" value="BT_3703"/>
</dbReference>
<dbReference type="GeneID" id="60924872"/>
<dbReference type="KEGG" id="bth:BT_3703"/>
<dbReference type="PATRIC" id="fig|226186.12.peg.3763"/>
<dbReference type="eggNOG" id="COG1082">
    <property type="taxonomic scope" value="Bacteria"/>
</dbReference>
<dbReference type="HOGENOM" id="CLU_011166_2_0_10"/>
<dbReference type="InParanoid" id="G8JZS4"/>
<dbReference type="OrthoDB" id="1109141at2"/>
<dbReference type="SABIO-RK" id="G8JZS4"/>
<dbReference type="UniPathway" id="UPA00153"/>
<dbReference type="EvolutionaryTrace" id="G8JZS4"/>
<dbReference type="PRO" id="PR:G8JZS4"/>
<dbReference type="Proteomes" id="UP000001414">
    <property type="component" value="Chromosome"/>
</dbReference>
<dbReference type="GO" id="GO:0042597">
    <property type="term" value="C:periplasmic space"/>
    <property type="evidence" value="ECO:0007669"/>
    <property type="project" value="UniProtKB-SubCell"/>
</dbReference>
<dbReference type="GO" id="GO:0005886">
    <property type="term" value="C:plasma membrane"/>
    <property type="evidence" value="ECO:0000314"/>
    <property type="project" value="MENGO"/>
</dbReference>
<dbReference type="GO" id="GO:0004558">
    <property type="term" value="F:alpha-1,4-glucosidase activity"/>
    <property type="evidence" value="ECO:0000315"/>
    <property type="project" value="MENGO"/>
</dbReference>
<dbReference type="GO" id="GO:0005509">
    <property type="term" value="F:calcium ion binding"/>
    <property type="evidence" value="ECO:0000314"/>
    <property type="project" value="UniProtKB"/>
</dbReference>
<dbReference type="GO" id="GO:0030246">
    <property type="term" value="F:carbohydrate binding"/>
    <property type="evidence" value="ECO:0007669"/>
    <property type="project" value="InterPro"/>
</dbReference>
<dbReference type="GO" id="GO:0004339">
    <property type="term" value="F:glucan 1,4-alpha-glucosidase activity"/>
    <property type="evidence" value="ECO:0000314"/>
    <property type="project" value="UniProtKB"/>
</dbReference>
<dbReference type="GO" id="GO:0005983">
    <property type="term" value="P:starch catabolic process"/>
    <property type="evidence" value="ECO:0000314"/>
    <property type="project" value="UniProtKB"/>
</dbReference>
<dbReference type="FunFam" id="3.20.20.70:FF:000220">
    <property type="entry name" value="Glucan 1,4-alpha-glucosidase SusB"/>
    <property type="match status" value="1"/>
</dbReference>
<dbReference type="Gene3D" id="2.70.98.10">
    <property type="match status" value="1"/>
</dbReference>
<dbReference type="Gene3D" id="3.20.20.70">
    <property type="entry name" value="Aldolase class I"/>
    <property type="match status" value="1"/>
</dbReference>
<dbReference type="InterPro" id="IPR013785">
    <property type="entry name" value="Aldolase_TIM"/>
</dbReference>
<dbReference type="InterPro" id="IPR014718">
    <property type="entry name" value="GH-type_carb-bd"/>
</dbReference>
<dbReference type="InterPro" id="IPR029483">
    <property type="entry name" value="GH97_C"/>
</dbReference>
<dbReference type="InterPro" id="IPR019563">
    <property type="entry name" value="GH97_catalytic"/>
</dbReference>
<dbReference type="InterPro" id="IPR029486">
    <property type="entry name" value="GH97_N"/>
</dbReference>
<dbReference type="InterPro" id="IPR017853">
    <property type="entry name" value="Glycoside_hydrolase_SF"/>
</dbReference>
<dbReference type="InterPro" id="IPR052720">
    <property type="entry name" value="Glycosyl_hydrolase_97"/>
</dbReference>
<dbReference type="PANTHER" id="PTHR35803:SF1">
    <property type="entry name" value="GLUCAN 1,4-ALPHA-GLUCOSIDASE SUSB"/>
    <property type="match status" value="1"/>
</dbReference>
<dbReference type="PANTHER" id="PTHR35803">
    <property type="entry name" value="GLUCAN 1,4-ALPHA-GLUCOSIDASE SUSB-RELATED"/>
    <property type="match status" value="1"/>
</dbReference>
<dbReference type="Pfam" id="PF14509">
    <property type="entry name" value="GH97_C"/>
    <property type="match status" value="1"/>
</dbReference>
<dbReference type="Pfam" id="PF14508">
    <property type="entry name" value="GH97_N"/>
    <property type="match status" value="1"/>
</dbReference>
<dbReference type="Pfam" id="PF10566">
    <property type="entry name" value="Glyco_hydro_97"/>
    <property type="match status" value="1"/>
</dbReference>
<dbReference type="SUPFAM" id="SSF51445">
    <property type="entry name" value="(Trans)glycosidases"/>
    <property type="match status" value="1"/>
</dbReference>
<organism>
    <name type="scientific">Bacteroides thetaiotaomicron (strain ATCC 29148 / DSM 2079 / JCM 5827 / CCUG 10774 / NCTC 10582 / VPI-5482 / E50)</name>
    <dbReference type="NCBI Taxonomy" id="226186"/>
    <lineage>
        <taxon>Bacteria</taxon>
        <taxon>Pseudomonadati</taxon>
        <taxon>Bacteroidota</taxon>
        <taxon>Bacteroidia</taxon>
        <taxon>Bacteroidales</taxon>
        <taxon>Bacteroidaceae</taxon>
        <taxon>Bacteroides</taxon>
    </lineage>
</organism>
<name>SUSB_BACTN</name>
<proteinExistence type="evidence at protein level"/>
<comment type="function">
    <text evidence="2 3">Glucoamylase that hydrolyzes alpha-1,4-glucosidic linkages, alpha-1,6-, alpha-1,3- and alpha-1,2-glucosidic linkages during starch degradation.</text>
</comment>
<comment type="catalytic activity">
    <reaction evidence="2">
        <text>Hydrolysis of terminal (1-&gt;4)-linked alpha-D-glucose residues successively from non-reducing ends of the chains with release of beta-D-glucose.</text>
        <dbReference type="EC" id="3.2.1.3"/>
    </reaction>
</comment>
<comment type="cofactor">
    <cofactor evidence="2">
        <name>Ca(2+)</name>
        <dbReference type="ChEBI" id="CHEBI:29108"/>
    </cofactor>
    <text evidence="2">Binds 1 Ca(2+) ion per subunit.</text>
</comment>
<comment type="biophysicochemical properties">
    <kinetics>
        <KM evidence="2">1.05 mM for maltose</KM>
        <KM evidence="2">0.29 mM for maltotriose</KM>
        <KM evidence="2">0.64 mM for maltotetraose</KM>
        <KM evidence="2">1.29 mM for maltopentaose</KM>
        <KM evidence="2">2.71 mM for maltohexaose</KM>
        <KM evidence="2">4.58 mM for maltoheptaose</KM>
        <KM evidence="2">6.89 mM for amylose DP17</KM>
        <KM evidence="2">0.67 mM for soluble starch</KM>
        <KM evidence="2">2.39 mM for kojibiose</KM>
        <KM evidence="2">3.14 mM for nigerose</KM>
        <KM evidence="2">6.34 mM for isomaltose</KM>
        <KM evidence="2">0.31 mM for panose</KM>
        <KM evidence="2">0.16 mM for p-nitrophenyl alpha-glucoside</KM>
        <text evidence="2">kcat is 182 sec(-1) for maltose. kcat is 270 sec(-1) for maltotriose. kcat is 321 sec(-1) for maltotetraose. kcat is 434 sec(-1) for maltopentaose. kcat is 346 sec(-1) for maltohexaose. kcat is 381 sec(-1) for maltoheptaose. kcat is 321 sec(-1) for amylose DP17. kcat is 115 sec(-1) for soluble starch. kcat is 141 sec(-1) for kojibiose. kcat is 207 sec(-1) for nigerose. kcat is 105 sec(-1) for isomaltose. kcat is 160 sec(-1) for panose. kcat is 161 sec(-1) for p-nitrophenyl alpha-glucoside.</text>
    </kinetics>
    <phDependence>
        <text evidence="2">Optimum pH is 6.5.</text>
    </phDependence>
</comment>
<comment type="pathway">
    <text>Glycan degradation; starch degradation.</text>
</comment>
<comment type="subunit">
    <text evidence="2">Monomer.</text>
</comment>
<comment type="subcellular location">
    <subcellularLocation>
        <location evidence="6">Periplasm</location>
    </subcellularLocation>
</comment>
<comment type="similarity">
    <text evidence="4">Belongs to the glycosyl hydrolase 97 family.</text>
</comment>
<comment type="caution">
    <text evidence="5">Although initially defined as an alpha-glucosidase, it produces beta-glucose by an inverting mechanism, suggesting it rather acts as a glucan 1,4-alpha-glucosidase.</text>
</comment>
<reference key="1">
    <citation type="journal article" date="1996" name="J. Bacteriol.">
        <title>Contribution of a neopullulanase, a pullulanase, and an alpha-glucosidase to growth of Bacteroides thetaiotaomicron on starch.</title>
        <authorList>
            <person name="D'Elia J.N."/>
            <person name="Salyers A.A."/>
        </authorList>
    </citation>
    <scope>NUCLEOTIDE SEQUENCE [GENOMIC DNA]</scope>
    <scope>FUNCTION</scope>
    <scope>SUBCELLULAR LOCATION</scope>
    <source>
        <strain>ATCC 29148 / DSM 2079 / JCM 5827 / CCUG 10774 / NCTC 10582 / VPI-5482 / E50</strain>
    </source>
</reference>
<reference key="2">
    <citation type="journal article" date="2003" name="Science">
        <title>A genomic view of the human-Bacteroides thetaiotaomicron symbiosis.</title>
        <authorList>
            <person name="Xu J."/>
            <person name="Bjursell M.K."/>
            <person name="Himrod J."/>
            <person name="Deng S."/>
            <person name="Carmichael L.K."/>
            <person name="Chiang H.C."/>
            <person name="Hooper L.V."/>
            <person name="Gordon J.I."/>
        </authorList>
    </citation>
    <scope>NUCLEOTIDE SEQUENCE [LARGE SCALE GENOMIC DNA]</scope>
    <source>
        <strain>ATCC 29148 / DSM 2079 / JCM 5827 / CCUG 10774 / NCTC 10582 / VPI-5482 / E50</strain>
    </source>
</reference>
<reference key="3">
    <citation type="journal article" date="2008" name="J. Biol. Chem.">
        <title>Structural and functional analysis of a glycoside hydrolase family 97 enzyme from Bacteroides thetaiotaomicron.</title>
        <authorList>
            <person name="Kitamura M."/>
            <person name="Okuyama M."/>
            <person name="Tanzawa F."/>
            <person name="Mori H."/>
            <person name="Kitago Y."/>
            <person name="Watanabe N."/>
            <person name="Kimura A."/>
            <person name="Tanaka I."/>
            <person name="Yao M."/>
        </authorList>
    </citation>
    <scope>X-RAY CRYSTALLOGRAPHY (1.60 ANGSTROMS) OF 22-738 IN COMPLEX WITH CALCIUM AND ACARBOSE</scope>
    <scope>FUNCTION</scope>
    <scope>ACTIVE SITE</scope>
    <scope>COFACTOR</scope>
    <scope>BIOPHYSICOCHEMICAL PROPERTIES</scope>
    <scope>CATALYTIC ACTIVITY</scope>
    <scope>SUBUNIT</scope>
    <scope>MUTAGENESIS OF GLU-439; GLU-508 AND GLU-532</scope>
</reference>
<feature type="signal peptide" evidence="1">
    <location>
        <begin position="1"/>
        <end position="21"/>
    </location>
</feature>
<feature type="chain" id="PRO_0000425886" description="Glucan 1,4-alpha-glucosidase SusB">
    <location>
        <begin position="22"/>
        <end position="738"/>
    </location>
</feature>
<feature type="active site" description="Proton donor/acceptor" evidence="5">
    <location>
        <position position="532"/>
    </location>
</feature>
<feature type="binding site" evidence="2">
    <location>
        <position position="194"/>
    </location>
    <ligand>
        <name>Ca(2+)</name>
        <dbReference type="ChEBI" id="CHEBI:29108"/>
    </ligand>
</feature>
<feature type="binding site">
    <location>
        <begin position="215"/>
        <end position="217"/>
    </location>
    <ligand>
        <name>substrate</name>
    </ligand>
</feature>
<feature type="binding site">
    <location>
        <begin position="437"/>
        <end position="439"/>
    </location>
    <ligand>
        <name>substrate</name>
    </ligand>
</feature>
<feature type="binding site">
    <location>
        <begin position="507"/>
        <end position="508"/>
    </location>
    <ligand>
        <name>substrate</name>
    </ligand>
</feature>
<feature type="binding site" evidence="2">
    <location>
        <position position="508"/>
    </location>
    <ligand>
        <name>Ca(2+)</name>
        <dbReference type="ChEBI" id="CHEBI:29108"/>
    </ligand>
</feature>
<feature type="binding site" evidence="2">
    <location>
        <position position="526"/>
    </location>
    <ligand>
        <name>Ca(2+)</name>
        <dbReference type="ChEBI" id="CHEBI:29108"/>
    </ligand>
</feature>
<feature type="binding site" evidence="2">
    <location>
        <position position="532"/>
    </location>
    <ligand>
        <name>Ca(2+)</name>
        <dbReference type="ChEBI" id="CHEBI:29108"/>
    </ligand>
</feature>
<feature type="site" description="Substrate">
    <location>
        <position position="194"/>
    </location>
</feature>
<feature type="site" description="Substrate">
    <location>
        <position position="331"/>
    </location>
</feature>
<feature type="site" description="Substrate">
    <location>
        <position position="467"/>
    </location>
</feature>
<feature type="mutagenesis site" description="Abolishes enzyme activity." evidence="2">
    <original>E</original>
    <variation>Q</variation>
    <location>
        <position position="439"/>
    </location>
</feature>
<feature type="mutagenesis site" description="Abolishes enzyme activity." evidence="2">
    <original>E</original>
    <variation>Q</variation>
    <location>
        <position position="508"/>
    </location>
</feature>
<feature type="mutagenesis site" description="Abolishes enzyme activity." evidence="2">
    <original>E</original>
    <variation>Q</variation>
    <location>
        <position position="532"/>
    </location>
</feature>
<feature type="strand" evidence="7">
    <location>
        <begin position="23"/>
        <end position="26"/>
    </location>
</feature>
<feature type="strand" evidence="7">
    <location>
        <begin position="32"/>
        <end position="38"/>
    </location>
</feature>
<feature type="strand" evidence="7">
    <location>
        <begin position="44"/>
        <end position="50"/>
    </location>
</feature>
<feature type="strand" evidence="7">
    <location>
        <begin position="53"/>
        <end position="60"/>
    </location>
</feature>
<feature type="strand" evidence="7">
    <location>
        <begin position="63"/>
        <end position="65"/>
    </location>
</feature>
<feature type="helix" evidence="7">
    <location>
        <begin position="88"/>
        <end position="90"/>
    </location>
</feature>
<feature type="strand" evidence="7">
    <location>
        <begin position="91"/>
        <end position="95"/>
    </location>
</feature>
<feature type="strand" evidence="7">
    <location>
        <begin position="97"/>
        <end position="110"/>
    </location>
</feature>
<feature type="strand" evidence="7">
    <location>
        <begin position="113"/>
        <end position="118"/>
    </location>
</feature>
<feature type="strand" evidence="7">
    <location>
        <begin position="120"/>
        <end position="133"/>
    </location>
</feature>
<feature type="helix" evidence="7">
    <location>
        <begin position="134"/>
        <end position="136"/>
    </location>
</feature>
<feature type="strand" evidence="7">
    <location>
        <begin position="138"/>
        <end position="147"/>
    </location>
</feature>
<feature type="strand" evidence="7">
    <location>
        <begin position="150"/>
        <end position="157"/>
    </location>
</feature>
<feature type="strand" evidence="7">
    <location>
        <begin position="163"/>
        <end position="171"/>
    </location>
</feature>
<feature type="strand" evidence="7">
    <location>
        <begin position="174"/>
        <end position="176"/>
    </location>
</feature>
<feature type="strand" evidence="7">
    <location>
        <begin position="182"/>
        <end position="185"/>
    </location>
</feature>
<feature type="strand" evidence="7">
    <location>
        <begin position="189"/>
        <end position="191"/>
    </location>
</feature>
<feature type="strand" evidence="7">
    <location>
        <begin position="198"/>
        <end position="201"/>
    </location>
</feature>
<feature type="helix" evidence="7">
    <location>
        <begin position="202"/>
        <end position="204"/>
    </location>
</feature>
<feature type="helix" evidence="7">
    <location>
        <begin position="205"/>
        <end position="212"/>
    </location>
</feature>
<feature type="strand" evidence="7">
    <location>
        <begin position="229"/>
        <end position="234"/>
    </location>
</feature>
<feature type="strand" evidence="7">
    <location>
        <begin position="240"/>
        <end position="246"/>
    </location>
</feature>
<feature type="strand" evidence="7">
    <location>
        <begin position="254"/>
        <end position="259"/>
    </location>
</feature>
<feature type="turn" evidence="7">
    <location>
        <begin position="260"/>
        <end position="263"/>
    </location>
</feature>
<feature type="strand" evidence="7">
    <location>
        <begin position="264"/>
        <end position="269"/>
    </location>
</feature>
<feature type="strand" evidence="7">
    <location>
        <begin position="279"/>
        <end position="285"/>
    </location>
</feature>
<feature type="strand" evidence="7">
    <location>
        <begin position="288"/>
        <end position="296"/>
    </location>
</feature>
<feature type="helix" evidence="7">
    <location>
        <begin position="297"/>
        <end position="302"/>
    </location>
</feature>
<feature type="helix" evidence="7">
    <location>
        <begin position="305"/>
        <end position="308"/>
    </location>
</feature>
<feature type="helix" evidence="7">
    <location>
        <begin position="318"/>
        <end position="321"/>
    </location>
</feature>
<feature type="strand" evidence="7">
    <location>
        <begin position="325"/>
        <end position="330"/>
    </location>
</feature>
<feature type="helix" evidence="7">
    <location>
        <begin position="332"/>
        <end position="335"/>
    </location>
</feature>
<feature type="strand" evidence="7">
    <location>
        <begin position="338"/>
        <end position="341"/>
    </location>
</feature>
<feature type="strand" evidence="7">
    <location>
        <begin position="343"/>
        <end position="346"/>
    </location>
</feature>
<feature type="turn" evidence="7">
    <location>
        <begin position="352"/>
        <end position="354"/>
    </location>
</feature>
<feature type="helix" evidence="7">
    <location>
        <begin position="357"/>
        <end position="359"/>
    </location>
</feature>
<feature type="helix" evidence="7">
    <location>
        <begin position="370"/>
        <end position="382"/>
    </location>
</feature>
<feature type="strand" evidence="7">
    <location>
        <begin position="386"/>
        <end position="390"/>
    </location>
</feature>
<feature type="helix" evidence="7">
    <location>
        <begin position="397"/>
        <end position="399"/>
    </location>
</feature>
<feature type="strand" evidence="7">
    <location>
        <begin position="401"/>
        <end position="403"/>
    </location>
</feature>
<feature type="helix" evidence="7">
    <location>
        <begin position="420"/>
        <end position="429"/>
    </location>
</feature>
<feature type="strand" evidence="7">
    <location>
        <begin position="433"/>
        <end position="439"/>
    </location>
</feature>
<feature type="helix" evidence="7">
    <location>
        <begin position="444"/>
        <end position="460"/>
    </location>
</feature>
<feature type="strand" evidence="7">
    <location>
        <begin position="465"/>
        <end position="469"/>
    </location>
</feature>
<feature type="helix" evidence="7">
    <location>
        <begin position="484"/>
        <end position="499"/>
    </location>
</feature>
<feature type="strand" evidence="7">
    <location>
        <begin position="503"/>
        <end position="506"/>
    </location>
</feature>
<feature type="helix" evidence="7">
    <location>
        <begin position="515"/>
        <end position="517"/>
    </location>
</feature>
<feature type="strand" evidence="7">
    <location>
        <begin position="522"/>
        <end position="525"/>
    </location>
</feature>
<feature type="helix" evidence="7">
    <location>
        <begin position="531"/>
        <end position="535"/>
    </location>
</feature>
<feature type="helix" evidence="7">
    <location>
        <begin position="543"/>
        <end position="545"/>
    </location>
</feature>
<feature type="helix" evidence="7">
    <location>
        <begin position="547"/>
        <end position="549"/>
    </location>
</feature>
<feature type="turn" evidence="7">
    <location>
        <begin position="550"/>
        <end position="554"/>
    </location>
</feature>
<feature type="helix" evidence="7">
    <location>
        <begin position="568"/>
        <end position="570"/>
    </location>
</feature>
<feature type="helix" evidence="7">
    <location>
        <begin position="583"/>
        <end position="592"/>
    </location>
</feature>
<feature type="strand" evidence="7">
    <location>
        <begin position="596"/>
        <end position="599"/>
    </location>
</feature>
<feature type="helix" evidence="7">
    <location>
        <begin position="604"/>
        <end position="607"/>
    </location>
</feature>
<feature type="helix" evidence="7">
    <location>
        <begin position="611"/>
        <end position="619"/>
    </location>
</feature>
<feature type="strand" evidence="7">
    <location>
        <begin position="622"/>
        <end position="633"/>
    </location>
</feature>
<feature type="turn" evidence="7">
    <location>
        <begin position="634"/>
        <end position="636"/>
    </location>
</feature>
<feature type="strand" evidence="7">
    <location>
        <begin position="637"/>
        <end position="644"/>
    </location>
</feature>
<feature type="strand" evidence="7">
    <location>
        <begin position="650"/>
        <end position="656"/>
    </location>
</feature>
<feature type="strand" evidence="7">
    <location>
        <begin position="661"/>
        <end position="666"/>
    </location>
</feature>
<feature type="strand" evidence="7">
    <location>
        <begin position="676"/>
        <end position="683"/>
    </location>
</feature>
<feature type="turn" evidence="7">
    <location>
        <begin position="689"/>
        <end position="691"/>
    </location>
</feature>
<feature type="strand" evidence="7">
    <location>
        <begin position="696"/>
        <end position="703"/>
    </location>
</feature>
<feature type="strand" evidence="7">
    <location>
        <begin position="708"/>
        <end position="713"/>
    </location>
</feature>
<feature type="strand" evidence="7">
    <location>
        <begin position="718"/>
        <end position="725"/>
    </location>
</feature>
<feature type="helix" evidence="8">
    <location>
        <begin position="729"/>
        <end position="731"/>
    </location>
</feature>